<geneLocation type="plasmid">
    <name>sym pNGR234a</name>
</geneLocation>
<sequence length="141" mass="15243">MPRTTKRLLDKLREVEALRGDGRSPPRGMLSRFGKGMVAFLREYVRILAYHLSVGPFPRLSKIIAAVGLAVSGPGVLYKVIEAIIAGEVRNRGAVIATAKEEPFEFYTMTLIVGSGAAFVTALGVAAFLVLILKGRPSRSE</sequence>
<reference key="1">
    <citation type="journal article" date="1997" name="Nature">
        <title>Molecular basis of symbiosis between Rhizobium and legumes.</title>
        <authorList>
            <person name="Freiberg C.A."/>
            <person name="Fellay R."/>
            <person name="Bairoch A."/>
            <person name="Broughton W.J."/>
            <person name="Rosenthal A."/>
            <person name="Perret X."/>
        </authorList>
    </citation>
    <scope>NUCLEOTIDE SEQUENCE [LARGE SCALE GENOMIC DNA]</scope>
    <source>
        <strain>NBRC 101917 / NGR234</strain>
    </source>
</reference>
<reference key="2">
    <citation type="journal article" date="2009" name="Appl. Environ. Microbiol.">
        <title>Rhizobium sp. strain NGR234 possesses a remarkable number of secretion systems.</title>
        <authorList>
            <person name="Schmeisser C."/>
            <person name="Liesegang H."/>
            <person name="Krysciak D."/>
            <person name="Bakkou N."/>
            <person name="Le Quere A."/>
            <person name="Wollherr A."/>
            <person name="Heinemeyer I."/>
            <person name="Morgenstern B."/>
            <person name="Pommerening-Roeser A."/>
            <person name="Flores M."/>
            <person name="Palacios R."/>
            <person name="Brenner S."/>
            <person name="Gottschalk G."/>
            <person name="Schmitz R.A."/>
            <person name="Broughton W.J."/>
            <person name="Perret X."/>
            <person name="Strittmatter A.W."/>
            <person name="Streit W.R."/>
        </authorList>
    </citation>
    <scope>NUCLEOTIDE SEQUENCE [LARGE SCALE GENOMIC DNA]</scope>
    <source>
        <strain>NBRC 101917 / NGR234</strain>
    </source>
</reference>
<accession>P55522</accession>
<gene>
    <name type="ordered locus">NGR_a02930</name>
    <name type="ORF">y4kB</name>
</gene>
<evidence type="ECO:0000255" key="1"/>
<evidence type="ECO:0000305" key="2"/>
<protein>
    <recommendedName>
        <fullName>Uncharacterized protein y4kB</fullName>
    </recommendedName>
</protein>
<organism>
    <name type="scientific">Sinorhizobium fredii (strain NBRC 101917 / NGR234)</name>
    <dbReference type="NCBI Taxonomy" id="394"/>
    <lineage>
        <taxon>Bacteria</taxon>
        <taxon>Pseudomonadati</taxon>
        <taxon>Pseudomonadota</taxon>
        <taxon>Alphaproteobacteria</taxon>
        <taxon>Hyphomicrobiales</taxon>
        <taxon>Rhizobiaceae</taxon>
        <taxon>Sinorhizobium/Ensifer group</taxon>
        <taxon>Sinorhizobium</taxon>
    </lineage>
</organism>
<name>Y4KB_SINFN</name>
<feature type="chain" id="PRO_0000200885" description="Uncharacterized protein y4kB">
    <location>
        <begin position="1"/>
        <end position="141"/>
    </location>
</feature>
<feature type="transmembrane region" description="Helical" evidence="1">
    <location>
        <begin position="64"/>
        <end position="84"/>
    </location>
</feature>
<feature type="transmembrane region" description="Helical" evidence="1">
    <location>
        <begin position="112"/>
        <end position="132"/>
    </location>
</feature>
<keyword id="KW-1003">Cell membrane</keyword>
<keyword id="KW-0472">Membrane</keyword>
<keyword id="KW-0614">Plasmid</keyword>
<keyword id="KW-1185">Reference proteome</keyword>
<keyword id="KW-0812">Transmembrane</keyword>
<keyword id="KW-1133">Transmembrane helix</keyword>
<dbReference type="EMBL" id="U00090">
    <property type="protein sequence ID" value="AAB91734.1"/>
    <property type="molecule type" value="Genomic_DNA"/>
</dbReference>
<dbReference type="RefSeq" id="NP_443932.1">
    <property type="nucleotide sequence ID" value="NC_000914.2"/>
</dbReference>
<dbReference type="KEGG" id="rhi:NGR_a02930"/>
<dbReference type="PATRIC" id="fig|394.7.peg.311"/>
<dbReference type="HOGENOM" id="CLU_1823797_0_0_5"/>
<dbReference type="OrthoDB" id="8421077at2"/>
<dbReference type="Proteomes" id="UP000001054">
    <property type="component" value="Plasmid pNGR234a"/>
</dbReference>
<dbReference type="GO" id="GO:0005886">
    <property type="term" value="C:plasma membrane"/>
    <property type="evidence" value="ECO:0007669"/>
    <property type="project" value="UniProtKB-SubCell"/>
</dbReference>
<comment type="subcellular location">
    <subcellularLocation>
        <location evidence="2">Cell membrane</location>
        <topology evidence="2">Multi-pass membrane protein</topology>
    </subcellularLocation>
</comment>
<proteinExistence type="predicted"/>